<comment type="function">
    <text evidence="1">Catalyzes the dephosphorylation of undecaprenyl diphosphate (UPP). Confers resistance to bacitracin.</text>
</comment>
<comment type="catalytic activity">
    <reaction evidence="1">
        <text>di-trans,octa-cis-undecaprenyl diphosphate + H2O = di-trans,octa-cis-undecaprenyl phosphate + phosphate + H(+)</text>
        <dbReference type="Rhea" id="RHEA:28094"/>
        <dbReference type="ChEBI" id="CHEBI:15377"/>
        <dbReference type="ChEBI" id="CHEBI:15378"/>
        <dbReference type="ChEBI" id="CHEBI:43474"/>
        <dbReference type="ChEBI" id="CHEBI:58405"/>
        <dbReference type="ChEBI" id="CHEBI:60392"/>
        <dbReference type="EC" id="3.6.1.27"/>
    </reaction>
</comment>
<comment type="subcellular location">
    <subcellularLocation>
        <location evidence="1">Cell inner membrane</location>
        <topology evidence="1">Multi-pass membrane protein</topology>
    </subcellularLocation>
</comment>
<comment type="miscellaneous">
    <text>Bacitracin is thought to be involved in the inhibition of peptidoglycan synthesis by sequestering undecaprenyl diphosphate, thereby reducing the pool of lipid carrier available.</text>
</comment>
<comment type="similarity">
    <text evidence="1">Belongs to the UppP family.</text>
</comment>
<sequence length="265" mass="28649">MDYINAAILGVIEGITEFLPISSTGHLIIAEQWLGHRSDMFNIVIQAGAILAVTIIYWRRLVDLVLGWRDPVNRDYAAKLIVAFLITAILGLVVKKLGFELPETATPIAWALIIGGIWMIFAEWAAARRPPHKEITWLVAILVGIAQIVAGVFPGTSRSGATIFVAMLAGTGNRASATEFAFLVGIPTMYAASAYELLKTFRDGGAAGEDWTALGIAFVVSTVVAFIAVKWLLAYIRSNRFTLFAIYRIILGVLLLGMAATGLIA</sequence>
<evidence type="ECO:0000255" key="1">
    <source>
        <dbReference type="HAMAP-Rule" id="MF_01006"/>
    </source>
</evidence>
<accession>Q1MMI4</accession>
<protein>
    <recommendedName>
        <fullName evidence="1">Undecaprenyl-diphosphatase</fullName>
        <ecNumber evidence="1">3.6.1.27</ecNumber>
    </recommendedName>
    <alternativeName>
        <fullName evidence="1">Bacitracin resistance protein</fullName>
    </alternativeName>
    <alternativeName>
        <fullName evidence="1">Undecaprenyl pyrophosphate phosphatase</fullName>
    </alternativeName>
</protein>
<keyword id="KW-0046">Antibiotic resistance</keyword>
<keyword id="KW-0997">Cell inner membrane</keyword>
<keyword id="KW-1003">Cell membrane</keyword>
<keyword id="KW-0133">Cell shape</keyword>
<keyword id="KW-0961">Cell wall biogenesis/degradation</keyword>
<keyword id="KW-0378">Hydrolase</keyword>
<keyword id="KW-0472">Membrane</keyword>
<keyword id="KW-0573">Peptidoglycan synthesis</keyword>
<keyword id="KW-0812">Transmembrane</keyword>
<keyword id="KW-1133">Transmembrane helix</keyword>
<dbReference type="EC" id="3.6.1.27" evidence="1"/>
<dbReference type="EMBL" id="AM236080">
    <property type="protein sequence ID" value="CAK05818.1"/>
    <property type="molecule type" value="Genomic_DNA"/>
</dbReference>
<dbReference type="RefSeq" id="WP_011650132.1">
    <property type="nucleotide sequence ID" value="NC_008380.1"/>
</dbReference>
<dbReference type="SMR" id="Q1MMI4"/>
<dbReference type="EnsemblBacteria" id="CAK05818">
    <property type="protein sequence ID" value="CAK05818"/>
    <property type="gene ID" value="RL0328"/>
</dbReference>
<dbReference type="KEGG" id="rle:RL0328"/>
<dbReference type="eggNOG" id="COG1968">
    <property type="taxonomic scope" value="Bacteria"/>
</dbReference>
<dbReference type="HOGENOM" id="CLU_060296_2_0_5"/>
<dbReference type="Proteomes" id="UP000006575">
    <property type="component" value="Chromosome"/>
</dbReference>
<dbReference type="GO" id="GO:0005886">
    <property type="term" value="C:plasma membrane"/>
    <property type="evidence" value="ECO:0007669"/>
    <property type="project" value="UniProtKB-SubCell"/>
</dbReference>
<dbReference type="GO" id="GO:0050380">
    <property type="term" value="F:undecaprenyl-diphosphatase activity"/>
    <property type="evidence" value="ECO:0007669"/>
    <property type="project" value="UniProtKB-UniRule"/>
</dbReference>
<dbReference type="GO" id="GO:0071555">
    <property type="term" value="P:cell wall organization"/>
    <property type="evidence" value="ECO:0007669"/>
    <property type="project" value="UniProtKB-KW"/>
</dbReference>
<dbReference type="GO" id="GO:0009252">
    <property type="term" value="P:peptidoglycan biosynthetic process"/>
    <property type="evidence" value="ECO:0007669"/>
    <property type="project" value="UniProtKB-KW"/>
</dbReference>
<dbReference type="GO" id="GO:0008360">
    <property type="term" value="P:regulation of cell shape"/>
    <property type="evidence" value="ECO:0007669"/>
    <property type="project" value="UniProtKB-KW"/>
</dbReference>
<dbReference type="GO" id="GO:0046677">
    <property type="term" value="P:response to antibiotic"/>
    <property type="evidence" value="ECO:0007669"/>
    <property type="project" value="UniProtKB-UniRule"/>
</dbReference>
<dbReference type="HAMAP" id="MF_01006">
    <property type="entry name" value="Undec_diphosphatase"/>
    <property type="match status" value="1"/>
</dbReference>
<dbReference type="InterPro" id="IPR003824">
    <property type="entry name" value="UppP"/>
</dbReference>
<dbReference type="NCBIfam" id="NF001390">
    <property type="entry name" value="PRK00281.1-4"/>
    <property type="match status" value="1"/>
</dbReference>
<dbReference type="PANTHER" id="PTHR30622">
    <property type="entry name" value="UNDECAPRENYL-DIPHOSPHATASE"/>
    <property type="match status" value="1"/>
</dbReference>
<dbReference type="PANTHER" id="PTHR30622:SF3">
    <property type="entry name" value="UNDECAPRENYL-DIPHOSPHATASE"/>
    <property type="match status" value="1"/>
</dbReference>
<dbReference type="Pfam" id="PF02673">
    <property type="entry name" value="BacA"/>
    <property type="match status" value="1"/>
</dbReference>
<gene>
    <name evidence="1" type="primary">uppP</name>
    <name type="ordered locus">RL0328</name>
</gene>
<reference key="1">
    <citation type="journal article" date="2006" name="Genome Biol.">
        <title>The genome of Rhizobium leguminosarum has recognizable core and accessory components.</title>
        <authorList>
            <person name="Young J.P.W."/>
            <person name="Crossman L.C."/>
            <person name="Johnston A.W.B."/>
            <person name="Thomson N.R."/>
            <person name="Ghazoui Z.F."/>
            <person name="Hull K.H."/>
            <person name="Wexler M."/>
            <person name="Curson A.R.J."/>
            <person name="Todd J.D."/>
            <person name="Poole P.S."/>
            <person name="Mauchline T.H."/>
            <person name="East A.K."/>
            <person name="Quail M.A."/>
            <person name="Churcher C."/>
            <person name="Arrowsmith C."/>
            <person name="Cherevach I."/>
            <person name="Chillingworth T."/>
            <person name="Clarke K."/>
            <person name="Cronin A."/>
            <person name="Davis P."/>
            <person name="Fraser A."/>
            <person name="Hance Z."/>
            <person name="Hauser H."/>
            <person name="Jagels K."/>
            <person name="Moule S."/>
            <person name="Mungall K."/>
            <person name="Norbertczak H."/>
            <person name="Rabbinowitsch E."/>
            <person name="Sanders M."/>
            <person name="Simmonds M."/>
            <person name="Whitehead S."/>
            <person name="Parkhill J."/>
        </authorList>
    </citation>
    <scope>NUCLEOTIDE SEQUENCE [LARGE SCALE GENOMIC DNA]</scope>
    <source>
        <strain>DSM 114642 / LMG 32736 / 3841</strain>
    </source>
</reference>
<feature type="chain" id="PRO_0000250253" description="Undecaprenyl-diphosphatase">
    <location>
        <begin position="1"/>
        <end position="265"/>
    </location>
</feature>
<feature type="transmembrane region" description="Helical" evidence="1">
    <location>
        <begin position="38"/>
        <end position="58"/>
    </location>
</feature>
<feature type="transmembrane region" description="Helical" evidence="1">
    <location>
        <begin position="80"/>
        <end position="100"/>
    </location>
</feature>
<feature type="transmembrane region" description="Helical" evidence="1">
    <location>
        <begin position="107"/>
        <end position="127"/>
    </location>
</feature>
<feature type="transmembrane region" description="Helical" evidence="1">
    <location>
        <begin position="135"/>
        <end position="155"/>
    </location>
</feature>
<feature type="transmembrane region" description="Helical" evidence="1">
    <location>
        <begin position="178"/>
        <end position="198"/>
    </location>
</feature>
<feature type="transmembrane region" description="Helical" evidence="1">
    <location>
        <begin position="216"/>
        <end position="236"/>
    </location>
</feature>
<feature type="transmembrane region" description="Helical" evidence="1">
    <location>
        <begin position="244"/>
        <end position="264"/>
    </location>
</feature>
<name>UPPP_RHIJ3</name>
<organism>
    <name type="scientific">Rhizobium johnstonii (strain DSM 114642 / LMG 32736 / 3841)</name>
    <name type="common">Rhizobium leguminosarum bv. viciae</name>
    <dbReference type="NCBI Taxonomy" id="216596"/>
    <lineage>
        <taxon>Bacteria</taxon>
        <taxon>Pseudomonadati</taxon>
        <taxon>Pseudomonadota</taxon>
        <taxon>Alphaproteobacteria</taxon>
        <taxon>Hyphomicrobiales</taxon>
        <taxon>Rhizobiaceae</taxon>
        <taxon>Rhizobium/Agrobacterium group</taxon>
        <taxon>Rhizobium</taxon>
        <taxon>Rhizobium johnstonii</taxon>
    </lineage>
</organism>
<proteinExistence type="inferred from homology"/>